<feature type="chain" id="PRO_0000287332" description="L-threonine dehydratase catabolic TdcB">
    <location>
        <begin position="1"/>
        <end position="346"/>
    </location>
</feature>
<feature type="binding site" evidence="1">
    <location>
        <begin position="59"/>
        <end position="60"/>
    </location>
    <ligand>
        <name>AMP</name>
        <dbReference type="ChEBI" id="CHEBI:456215"/>
    </ligand>
</feature>
<feature type="binding site" evidence="1">
    <location>
        <position position="94"/>
    </location>
    <ligand>
        <name>AMP</name>
        <dbReference type="ChEBI" id="CHEBI:456215"/>
    </ligand>
</feature>
<feature type="binding site" evidence="1">
    <location>
        <begin position="125"/>
        <end position="126"/>
    </location>
    <ligand>
        <name>AMP</name>
        <dbReference type="ChEBI" id="CHEBI:456215"/>
    </ligand>
</feature>
<feature type="binding site" evidence="1">
    <location>
        <position position="321"/>
    </location>
    <ligand>
        <name>AMP</name>
        <dbReference type="ChEBI" id="CHEBI:456215"/>
    </ligand>
</feature>
<feature type="modified residue" description="N6-(pyridoxal phosphate)lysine" evidence="1">
    <location>
        <position position="64"/>
    </location>
</feature>
<proteinExistence type="evidence at protein level"/>
<keyword id="KW-0021">Allosteric enzyme</keyword>
<keyword id="KW-0456">Lyase</keyword>
<keyword id="KW-0547">Nucleotide-binding</keyword>
<keyword id="KW-0663">Pyridoxal phosphate</keyword>
<protein>
    <recommendedName>
        <fullName>L-threonine dehydratase catabolic TdcB</fullName>
        <ecNumber>4.3.1.19</ecNumber>
    </recommendedName>
    <alternativeName>
        <fullName>Threonine deaminase</fullName>
    </alternativeName>
</protein>
<sequence>MTTNTVTLQTAHIVSLGDIEEAKASIKPFIRRTPLIKSMYLSQNITKGNVYLKLENMQFTGSFKFRGASNKINHLSDEQKAKGIIGASAGNHAQGVALTAKLLGIDATIVMPETAPIAKQNATKGYGAKVILKGKNFNETRLYMEELAKENGMTIVHPYDDKFVMAGQGTIGLEILDDIWNVNTVIVPVGGGGLIAGIATALKSFNPSIHIIGVQAENVHGMAESFYKRALTEHREDSTIADGCDVKVPGEKTYEVVKHLVDEFILVSEEEIEHAMQDLMQRAKIITEGAGALPTAAILSGKIDKKWLEGKNVVALVSGGNVDLTRVSGVIEHGLNIADTSKGVVG</sequence>
<name>TDCB_STAAN</name>
<dbReference type="EC" id="4.3.1.19"/>
<dbReference type="EMBL" id="BA000018">
    <property type="protein sequence ID" value="BAB42531.1"/>
    <property type="molecule type" value="Genomic_DNA"/>
</dbReference>
<dbReference type="PIR" id="F89921">
    <property type="entry name" value="F89921"/>
</dbReference>
<dbReference type="RefSeq" id="WP_000210817.1">
    <property type="nucleotide sequence ID" value="NC_002745.2"/>
</dbReference>
<dbReference type="SMR" id="Q7A5L8"/>
<dbReference type="EnsemblBacteria" id="BAB42531">
    <property type="protein sequence ID" value="BAB42531"/>
    <property type="gene ID" value="BAB42531"/>
</dbReference>
<dbReference type="KEGG" id="sau:SA1271"/>
<dbReference type="HOGENOM" id="CLU_021152_4_2_9"/>
<dbReference type="UniPathway" id="UPA00052">
    <property type="reaction ID" value="UER00507"/>
</dbReference>
<dbReference type="GO" id="GO:0003941">
    <property type="term" value="F:L-serine ammonia-lyase activity"/>
    <property type="evidence" value="ECO:0007669"/>
    <property type="project" value="TreeGrafter"/>
</dbReference>
<dbReference type="GO" id="GO:0000166">
    <property type="term" value="F:nucleotide binding"/>
    <property type="evidence" value="ECO:0007669"/>
    <property type="project" value="UniProtKB-KW"/>
</dbReference>
<dbReference type="GO" id="GO:0030170">
    <property type="term" value="F:pyridoxal phosphate binding"/>
    <property type="evidence" value="ECO:0007669"/>
    <property type="project" value="InterPro"/>
</dbReference>
<dbReference type="GO" id="GO:0004794">
    <property type="term" value="F:threonine deaminase activity"/>
    <property type="evidence" value="ECO:0007669"/>
    <property type="project" value="UniProtKB-EC"/>
</dbReference>
<dbReference type="GO" id="GO:0009097">
    <property type="term" value="P:isoleucine biosynthetic process"/>
    <property type="evidence" value="ECO:0007669"/>
    <property type="project" value="TreeGrafter"/>
</dbReference>
<dbReference type="GO" id="GO:0006565">
    <property type="term" value="P:L-serine catabolic process"/>
    <property type="evidence" value="ECO:0007669"/>
    <property type="project" value="TreeGrafter"/>
</dbReference>
<dbReference type="GO" id="GO:0070689">
    <property type="term" value="P:L-threonine catabolic process to propionate"/>
    <property type="evidence" value="ECO:0007669"/>
    <property type="project" value="UniProtKB-UniPathway"/>
</dbReference>
<dbReference type="CDD" id="cd01562">
    <property type="entry name" value="Thr-dehyd"/>
    <property type="match status" value="1"/>
</dbReference>
<dbReference type="FunFam" id="3.40.50.1100:FF:000007">
    <property type="entry name" value="L-threonine dehydratase catabolic TdcB"/>
    <property type="match status" value="1"/>
</dbReference>
<dbReference type="FunFam" id="3.40.50.1100:FF:000005">
    <property type="entry name" value="Threonine dehydratase catabolic"/>
    <property type="match status" value="1"/>
</dbReference>
<dbReference type="Gene3D" id="3.40.50.1100">
    <property type="match status" value="2"/>
</dbReference>
<dbReference type="InterPro" id="IPR050147">
    <property type="entry name" value="Ser/Thr_Dehydratase"/>
</dbReference>
<dbReference type="InterPro" id="IPR000634">
    <property type="entry name" value="Ser/Thr_deHydtase_PyrdxlP-BS"/>
</dbReference>
<dbReference type="InterPro" id="IPR005789">
    <property type="entry name" value="Thr_deHydtase_catblc"/>
</dbReference>
<dbReference type="InterPro" id="IPR001926">
    <property type="entry name" value="TrpB-like_PALP"/>
</dbReference>
<dbReference type="InterPro" id="IPR036052">
    <property type="entry name" value="TrpB-like_PALP_sf"/>
</dbReference>
<dbReference type="NCBIfam" id="TIGR01127">
    <property type="entry name" value="ilvA_1Cterm"/>
    <property type="match status" value="1"/>
</dbReference>
<dbReference type="NCBIfam" id="NF006389">
    <property type="entry name" value="PRK08638.1"/>
    <property type="match status" value="1"/>
</dbReference>
<dbReference type="PANTHER" id="PTHR48078:SF6">
    <property type="entry name" value="L-THREONINE DEHYDRATASE CATABOLIC TDCB"/>
    <property type="match status" value="1"/>
</dbReference>
<dbReference type="PANTHER" id="PTHR48078">
    <property type="entry name" value="THREONINE DEHYDRATASE, MITOCHONDRIAL-RELATED"/>
    <property type="match status" value="1"/>
</dbReference>
<dbReference type="Pfam" id="PF00291">
    <property type="entry name" value="PALP"/>
    <property type="match status" value="1"/>
</dbReference>
<dbReference type="SUPFAM" id="SSF53686">
    <property type="entry name" value="Tryptophan synthase beta subunit-like PLP-dependent enzymes"/>
    <property type="match status" value="1"/>
</dbReference>
<dbReference type="PROSITE" id="PS00165">
    <property type="entry name" value="DEHYDRATASE_SER_THR"/>
    <property type="match status" value="1"/>
</dbReference>
<comment type="function">
    <text evidence="1">Catalyzes the anaerobic formation of alpha-ketobutyrate and ammonia from threonine in a two-step reaction. The first step involved a dehydration of threonine and a production of enamine intermediates (aminocrotonate), which tautomerizes to its imine form (iminobutyrate). Both intermediates are unstable and short-lived. The second step is the nonenzymatic hydrolysis of the enamine/imine intermediates to form 2-ketobutyrate and free ammonia. In the low water environment of the cell, the second step is accelerated by RidA (By similarity).</text>
</comment>
<comment type="catalytic activity">
    <reaction>
        <text>L-threonine = 2-oxobutanoate + NH4(+)</text>
        <dbReference type="Rhea" id="RHEA:22108"/>
        <dbReference type="ChEBI" id="CHEBI:16763"/>
        <dbReference type="ChEBI" id="CHEBI:28938"/>
        <dbReference type="ChEBI" id="CHEBI:57926"/>
        <dbReference type="EC" id="4.3.1.19"/>
    </reaction>
</comment>
<comment type="cofactor">
    <cofactor evidence="1">
        <name>pyridoxal 5'-phosphate</name>
        <dbReference type="ChEBI" id="CHEBI:597326"/>
    </cofactor>
</comment>
<comment type="activity regulation">
    <text evidence="1">Each protein molecule can bind up to four molecules of AMP, which act as an allosteric activator to the enzyme.</text>
</comment>
<comment type="pathway">
    <text>Amino-acid degradation; L-threonine degradation via propanoate pathway; propanoate from L-threonine: step 1/4.</text>
</comment>
<comment type="subunit">
    <text evidence="1">In the native structure, TdcB is in a dimeric form, whereas in the TdcB-AMP complex, it exists in a tetrameric form (dimer of dimers).</text>
</comment>
<comment type="similarity">
    <text evidence="2">Belongs to the serine/threonine dehydratase family.</text>
</comment>
<evidence type="ECO:0000250" key="1"/>
<evidence type="ECO:0000305" key="2"/>
<gene>
    <name type="primary">tdcB</name>
    <name type="ordered locus">SA1271</name>
</gene>
<accession>Q7A5L8</accession>
<organism>
    <name type="scientific">Staphylococcus aureus (strain N315)</name>
    <dbReference type="NCBI Taxonomy" id="158879"/>
    <lineage>
        <taxon>Bacteria</taxon>
        <taxon>Bacillati</taxon>
        <taxon>Bacillota</taxon>
        <taxon>Bacilli</taxon>
        <taxon>Bacillales</taxon>
        <taxon>Staphylococcaceae</taxon>
        <taxon>Staphylococcus</taxon>
    </lineage>
</organism>
<reference key="1">
    <citation type="journal article" date="2001" name="Lancet">
        <title>Whole genome sequencing of meticillin-resistant Staphylococcus aureus.</title>
        <authorList>
            <person name="Kuroda M."/>
            <person name="Ohta T."/>
            <person name="Uchiyama I."/>
            <person name="Baba T."/>
            <person name="Yuzawa H."/>
            <person name="Kobayashi I."/>
            <person name="Cui L."/>
            <person name="Oguchi A."/>
            <person name="Aoki K."/>
            <person name="Nagai Y."/>
            <person name="Lian J.-Q."/>
            <person name="Ito T."/>
            <person name="Kanamori M."/>
            <person name="Matsumaru H."/>
            <person name="Maruyama A."/>
            <person name="Murakami H."/>
            <person name="Hosoyama A."/>
            <person name="Mizutani-Ui Y."/>
            <person name="Takahashi N.K."/>
            <person name="Sawano T."/>
            <person name="Inoue R."/>
            <person name="Kaito C."/>
            <person name="Sekimizu K."/>
            <person name="Hirakawa H."/>
            <person name="Kuhara S."/>
            <person name="Goto S."/>
            <person name="Yabuzaki J."/>
            <person name="Kanehisa M."/>
            <person name="Yamashita A."/>
            <person name="Oshima K."/>
            <person name="Furuya K."/>
            <person name="Yoshino C."/>
            <person name="Shiba T."/>
            <person name="Hattori M."/>
            <person name="Ogasawara N."/>
            <person name="Hayashi H."/>
            <person name="Hiramatsu K."/>
        </authorList>
    </citation>
    <scope>NUCLEOTIDE SEQUENCE [LARGE SCALE GENOMIC DNA]</scope>
    <source>
        <strain>N315</strain>
    </source>
</reference>
<reference key="2">
    <citation type="submission" date="2007-10" db="UniProtKB">
        <title>Shotgun proteomic analysis of total and membrane protein extracts of S. aureus strain N315.</title>
        <authorList>
            <person name="Vaezzadeh A.R."/>
            <person name="Deshusses J."/>
            <person name="Lescuyer P."/>
            <person name="Hochstrasser D.F."/>
        </authorList>
    </citation>
    <scope>IDENTIFICATION BY MASS SPECTROMETRY [LARGE SCALE ANALYSIS]</scope>
    <source>
        <strain>N315</strain>
    </source>
</reference>